<dbReference type="SMR" id="P86768"/>
<dbReference type="iPTMnet" id="P86768"/>
<dbReference type="GO" id="GO:0005737">
    <property type="term" value="C:cytoplasm"/>
    <property type="evidence" value="ECO:0007669"/>
    <property type="project" value="TreeGrafter"/>
</dbReference>
<dbReference type="GO" id="GO:0005509">
    <property type="term" value="F:calcium ion binding"/>
    <property type="evidence" value="ECO:0007669"/>
    <property type="project" value="InterPro"/>
</dbReference>
<dbReference type="CDD" id="cd16255">
    <property type="entry name" value="EFh_parvalbumin_beta"/>
    <property type="match status" value="1"/>
</dbReference>
<dbReference type="FunFam" id="1.10.238.10:FF:000060">
    <property type="entry name" value="Parvalbumin, thymic"/>
    <property type="match status" value="1"/>
</dbReference>
<dbReference type="Gene3D" id="1.10.238.10">
    <property type="entry name" value="EF-hand"/>
    <property type="match status" value="1"/>
</dbReference>
<dbReference type="InterPro" id="IPR011992">
    <property type="entry name" value="EF-hand-dom_pair"/>
</dbReference>
<dbReference type="InterPro" id="IPR018247">
    <property type="entry name" value="EF_Hand_1_Ca_BS"/>
</dbReference>
<dbReference type="InterPro" id="IPR002048">
    <property type="entry name" value="EF_hand_dom"/>
</dbReference>
<dbReference type="InterPro" id="IPR008080">
    <property type="entry name" value="Parvalbumin"/>
</dbReference>
<dbReference type="PANTHER" id="PTHR11653:SF12">
    <property type="entry name" value="PARVALBUMIN"/>
    <property type="match status" value="1"/>
</dbReference>
<dbReference type="PANTHER" id="PTHR11653">
    <property type="entry name" value="PARVALBUMIN ALPHA"/>
    <property type="match status" value="1"/>
</dbReference>
<dbReference type="Pfam" id="PF13499">
    <property type="entry name" value="EF-hand_7"/>
    <property type="match status" value="1"/>
</dbReference>
<dbReference type="PRINTS" id="PR01697">
    <property type="entry name" value="PARVALBUMIN"/>
</dbReference>
<dbReference type="SUPFAM" id="SSF47473">
    <property type="entry name" value="EF-hand"/>
    <property type="match status" value="1"/>
</dbReference>
<dbReference type="PROSITE" id="PS00018">
    <property type="entry name" value="EF_HAND_1"/>
    <property type="match status" value="2"/>
</dbReference>
<dbReference type="PROSITE" id="PS50222">
    <property type="entry name" value="EF_HAND_2"/>
    <property type="match status" value="2"/>
</dbReference>
<proteinExistence type="evidence at protein level"/>
<reference evidence="8" key="1">
    <citation type="journal article" date="2010" name="J. Proteome Res.">
        <title>Extensive de novo sequencing of new parvalbumin isoforms using a novel combination of bottom-up proteomics, accurate molecular mass measurement by FTICR-MS, and selected MS/MS ion monitoring.</title>
        <authorList>
            <person name="Carrera M."/>
            <person name="Canas B."/>
            <person name="Vazquez J."/>
            <person name="Gallardo J.M."/>
        </authorList>
    </citation>
    <scope>PROTEIN SEQUENCE</scope>
    <scope>MASS SPECTROMETRY</scope>
    <scope>ACETYLATION AT ALA-1</scope>
    <source>
        <tissue evidence="6">Muscle</tissue>
    </source>
</reference>
<sequence length="108" mass="11321">AFAGILADADITAALAACKAEGTFKHGEFFTKIGLKGKSPADIKKVFGIIDQDKSDFVEEDELKLFLQNFSAGARALTDAETATFLKAGDSDGDGKIGVDEFAAMVKG</sequence>
<feature type="chain" id="PRO_0000399428" description="Parvalbumin beta 1">
    <location>
        <begin position="1"/>
        <end position="108"/>
    </location>
</feature>
<feature type="domain" description="EF-hand 1" evidence="5">
    <location>
        <begin position="38"/>
        <end position="73"/>
    </location>
</feature>
<feature type="domain" description="EF-hand 2" evidence="5">
    <location>
        <begin position="77"/>
        <end position="108"/>
    </location>
</feature>
<feature type="binding site" evidence="1 5">
    <location>
        <position position="51"/>
    </location>
    <ligand>
        <name>Ca(2+)</name>
        <dbReference type="ChEBI" id="CHEBI:29108"/>
        <label>1</label>
    </ligand>
</feature>
<feature type="binding site" evidence="1 5">
    <location>
        <position position="53"/>
    </location>
    <ligand>
        <name>Ca(2+)</name>
        <dbReference type="ChEBI" id="CHEBI:29108"/>
        <label>1</label>
    </ligand>
</feature>
<feature type="binding site" evidence="1 5">
    <location>
        <position position="55"/>
    </location>
    <ligand>
        <name>Ca(2+)</name>
        <dbReference type="ChEBI" id="CHEBI:29108"/>
        <label>1</label>
    </ligand>
</feature>
<feature type="binding site" evidence="1">
    <location>
        <position position="57"/>
    </location>
    <ligand>
        <name>Ca(2+)</name>
        <dbReference type="ChEBI" id="CHEBI:29108"/>
        <label>1</label>
    </ligand>
</feature>
<feature type="binding site" evidence="1">
    <location>
        <position position="59"/>
    </location>
    <ligand>
        <name>Ca(2+)</name>
        <dbReference type="ChEBI" id="CHEBI:29108"/>
        <label>1</label>
    </ligand>
</feature>
<feature type="binding site" evidence="1 5">
    <location>
        <position position="62"/>
    </location>
    <ligand>
        <name>Ca(2+)</name>
        <dbReference type="ChEBI" id="CHEBI:29108"/>
        <label>1</label>
    </ligand>
</feature>
<feature type="binding site" evidence="1 5">
    <location>
        <position position="90"/>
    </location>
    <ligand>
        <name>Ca(2+)</name>
        <dbReference type="ChEBI" id="CHEBI:29108"/>
        <label>2</label>
    </ligand>
</feature>
<feature type="binding site" evidence="1 5">
    <location>
        <position position="92"/>
    </location>
    <ligand>
        <name>Ca(2+)</name>
        <dbReference type="ChEBI" id="CHEBI:29108"/>
        <label>2</label>
    </ligand>
</feature>
<feature type="binding site" evidence="1 5">
    <location>
        <position position="94"/>
    </location>
    <ligand>
        <name>Ca(2+)</name>
        <dbReference type="ChEBI" id="CHEBI:29108"/>
        <label>2</label>
    </ligand>
</feature>
<feature type="binding site" evidence="5">
    <location>
        <position position="96"/>
    </location>
    <ligand>
        <name>Ca(2+)</name>
        <dbReference type="ChEBI" id="CHEBI:29108"/>
        <label>2</label>
    </ligand>
</feature>
<feature type="binding site" evidence="1 5">
    <location>
        <position position="101"/>
    </location>
    <ligand>
        <name>Ca(2+)</name>
        <dbReference type="ChEBI" id="CHEBI:29108"/>
        <label>2</label>
    </ligand>
</feature>
<feature type="modified residue" description="N-acetylalanine" evidence="6">
    <location>
        <position position="1"/>
    </location>
</feature>
<feature type="unsure residue" description="I or L" evidence="6">
    <location>
        <position position="5"/>
    </location>
</feature>
<feature type="unsure residue" description="L or I" evidence="6">
    <location>
        <position position="6"/>
    </location>
</feature>
<feature type="unsure residue" description="I or L" evidence="6">
    <location>
        <position position="11"/>
    </location>
</feature>
<feature type="unsure residue" description="L or I" evidence="6">
    <location>
        <position position="15"/>
    </location>
</feature>
<feature type="unsure residue" description="K or Q" evidence="6">
    <location>
        <position position="19"/>
    </location>
</feature>
<feature type="unsure residue" description="K or Q" evidence="6">
    <location>
        <position position="25"/>
    </location>
</feature>
<feature type="unsure residue" description="K or Q" evidence="6">
    <location>
        <position position="32"/>
    </location>
</feature>
<feature type="unsure residue" description="I or L" evidence="6">
    <location>
        <position position="33"/>
    </location>
</feature>
<feature type="unsure residue" description="L or I" evidence="6">
    <location>
        <position position="35"/>
    </location>
</feature>
<feature type="unsure residue" description="K or Q" evidence="6">
    <location>
        <position position="36"/>
    </location>
</feature>
<feature type="unsure residue" description="K or Q" evidence="6">
    <location>
        <position position="38"/>
    </location>
</feature>
<feature type="unsure residue" description="I or L" evidence="6">
    <location>
        <position position="43"/>
    </location>
</feature>
<feature type="unsure residue" description="K or Q" evidence="6">
    <location>
        <position position="44"/>
    </location>
</feature>
<feature type="unsure residue" description="K or Q" evidence="6">
    <location>
        <position position="45"/>
    </location>
</feature>
<feature type="unsure residue" description="I or L" evidence="6">
    <location>
        <position position="49"/>
    </location>
</feature>
<feature type="unsure residue" description="I or L" evidence="6">
    <location>
        <position position="50"/>
    </location>
</feature>
<feature type="unsure residue" description="Q or K" evidence="6">
    <location>
        <position position="52"/>
    </location>
</feature>
<feature type="unsure residue" description="K or Q" evidence="6">
    <location>
        <position position="54"/>
    </location>
</feature>
<feature type="unsure residue" description="L or I" evidence="6">
    <location>
        <position position="63"/>
    </location>
</feature>
<feature type="unsure residue" description="K or Q" evidence="6">
    <location>
        <position position="64"/>
    </location>
</feature>
<feature type="unsure residue" description="L or I" evidence="6">
    <location>
        <position position="65"/>
    </location>
</feature>
<feature type="unsure residue" description="L or I" evidence="6">
    <location>
        <position position="67"/>
    </location>
</feature>
<feature type="unsure residue" description="Q or K" evidence="6">
    <location>
        <position position="68"/>
    </location>
</feature>
<feature type="unsure residue" description="L or I" evidence="6">
    <location>
        <position position="77"/>
    </location>
</feature>
<feature type="unsure residue" description="L or I" evidence="6">
    <location>
        <position position="86"/>
    </location>
</feature>
<feature type="unsure residue" description="K or Q" evidence="6">
    <location>
        <position position="87"/>
    </location>
</feature>
<feature type="unsure residue" description="K or Q" evidence="6">
    <location>
        <position position="96"/>
    </location>
</feature>
<feature type="unsure residue" description="I or L" evidence="6">
    <location>
        <position position="97"/>
    </location>
</feature>
<feature type="unsure residue" description="K or Q" evidence="6">
    <location>
        <position position="107"/>
    </location>
</feature>
<protein>
    <recommendedName>
        <fullName evidence="7">Parvalbumin beta 1</fullName>
    </recommendedName>
</protein>
<accession>P86768</accession>
<keyword id="KW-0007">Acetylation</keyword>
<keyword id="KW-0020">Allergen</keyword>
<keyword id="KW-0106">Calcium</keyword>
<keyword id="KW-0903">Direct protein sequencing</keyword>
<keyword id="KW-0479">Metal-binding</keyword>
<keyword id="KW-0514">Muscle protein</keyword>
<keyword id="KW-0677">Repeat</keyword>
<name>PRVB1_MERPA</name>
<organism>
    <name type="scientific">Merluccius paradoxus</name>
    <name type="common">Deep-water Cape hake</name>
    <name type="synonym">Merluccius capensis paradoxus</name>
    <dbReference type="NCBI Taxonomy" id="89950"/>
    <lineage>
        <taxon>Eukaryota</taxon>
        <taxon>Metazoa</taxon>
        <taxon>Chordata</taxon>
        <taxon>Craniata</taxon>
        <taxon>Vertebrata</taxon>
        <taxon>Euteleostomi</taxon>
        <taxon>Actinopterygii</taxon>
        <taxon>Neopterygii</taxon>
        <taxon>Teleostei</taxon>
        <taxon>Neoteleostei</taxon>
        <taxon>Acanthomorphata</taxon>
        <taxon>Zeiogadaria</taxon>
        <taxon>Gadariae</taxon>
        <taxon>Gadiformes</taxon>
        <taxon>Gadoidei</taxon>
        <taxon>Merlucciidae</taxon>
        <taxon>Merluccius</taxon>
    </lineage>
</organism>
<comment type="function">
    <text evidence="2 3">In muscle, parvalbumin is thought to be involved in relaxation after contraction. It binds two calcium ions (By similarity).</text>
</comment>
<comment type="mass spectrometry" mass="11355.808" error="0.0447" method="Electrospray" evidence="6"/>
<comment type="miscellaneous">
    <text evidence="2 6">Is regarded as an important allergen.</text>
</comment>
<comment type="miscellaneous">
    <text evidence="6">On the 2D-gel the determined pI of this protein is: 4.51, its MW is: 11.35 kDa.</text>
</comment>
<comment type="similarity">
    <text evidence="4">Belongs to the parvalbumin family.</text>
</comment>
<evidence type="ECO:0000250" key="1">
    <source>
        <dbReference type="UniProtKB" id="P02621"/>
    </source>
</evidence>
<evidence type="ECO:0000250" key="2">
    <source>
        <dbReference type="UniProtKB" id="P02622"/>
    </source>
</evidence>
<evidence type="ECO:0000250" key="3">
    <source>
        <dbReference type="UniProtKB" id="P02624"/>
    </source>
</evidence>
<evidence type="ECO:0000255" key="4"/>
<evidence type="ECO:0000255" key="5">
    <source>
        <dbReference type="PROSITE-ProRule" id="PRU00448"/>
    </source>
</evidence>
<evidence type="ECO:0000269" key="6">
    <source>
    </source>
</evidence>
<evidence type="ECO:0000303" key="7">
    <source>
    </source>
</evidence>
<evidence type="ECO:0000305" key="8"/>